<comment type="function">
    <text evidence="1">Component of the sulfite reductase complex that catalyzes the 6-electron reduction of sulfite to sulfide. This is one of several activities required for the biosynthesis of L-cysteine from sulfate. The flavoprotein component catalyzes the electron flow from NADPH -&gt; FAD -&gt; FMN to the hemoprotein component.</text>
</comment>
<comment type="catalytic activity">
    <reaction evidence="1">
        <text>hydrogen sulfide + 3 NADP(+) + 3 H2O = sulfite + 3 NADPH + 4 H(+)</text>
        <dbReference type="Rhea" id="RHEA:13801"/>
        <dbReference type="ChEBI" id="CHEBI:15377"/>
        <dbReference type="ChEBI" id="CHEBI:15378"/>
        <dbReference type="ChEBI" id="CHEBI:17359"/>
        <dbReference type="ChEBI" id="CHEBI:29919"/>
        <dbReference type="ChEBI" id="CHEBI:57783"/>
        <dbReference type="ChEBI" id="CHEBI:58349"/>
        <dbReference type="EC" id="1.8.1.2"/>
    </reaction>
</comment>
<comment type="cofactor">
    <cofactor evidence="1">
        <name>FAD</name>
        <dbReference type="ChEBI" id="CHEBI:57692"/>
    </cofactor>
    <text evidence="1">Binds 1 FAD per subunit.</text>
</comment>
<comment type="cofactor">
    <cofactor evidence="1">
        <name>FMN</name>
        <dbReference type="ChEBI" id="CHEBI:58210"/>
    </cofactor>
    <text evidence="1">Binds 1 FMN per subunit.</text>
</comment>
<comment type="pathway">
    <text evidence="1">Sulfur metabolism; hydrogen sulfide biosynthesis; hydrogen sulfide from sulfite (NADPH route): step 1/1.</text>
</comment>
<comment type="subunit">
    <text evidence="1">Alpha(8)-beta(8). The alpha component is a flavoprotein, the beta component is a hemoprotein.</text>
</comment>
<comment type="similarity">
    <text evidence="1">Belongs to the NADPH-dependent sulphite reductase flavoprotein subunit CysJ family.</text>
</comment>
<comment type="similarity">
    <text evidence="1">In the N-terminal section; belongs to the flavodoxin family.</text>
</comment>
<comment type="similarity">
    <text evidence="1">In the C-terminal section; belongs to the flavoprotein pyridine nucleotide cytochrome reductase family.</text>
</comment>
<sequence>MSEHDMQNTNPPLPPLPPEITQLLSGLDAAQWAWLSGYAWAKAGNGASAGLPALQTALPAAEPFSVTVLSASQTGNAKSVADKAADSLEAAGIQVSRAELKDYKAKNIAGERRLLLVTSTQGEGEPPKEAVVLHKLLNGKKAPKLDKLQFAVLGLGDSSYPNFCQAGKDFDRRFEELGAKRLLERVDADLDFTASANAWTDNIAALLKEEAAKNRATPAPQTTPPAGLQTAPDGRYCKAAPFPAALLANQKITARQSDKDVRHIEIDLSGSDLHYLPGDALGVWFDNDPALVREILDLLGIDPATEIQAGGKMMPVARALSSHFELTQNTPAFVKGYAAFAHYEELDKIIADNAVLQDFVQNTPIVDVLHRFPASLTAEQFIRLLRPLAPRLYSISSAQAEVGDEVHLTVGVVRFEHEGRARTGGASGFLADRLEEDGTVRVFVERNDGFRLPEDSRKPIVMIGSGTGVAPFRAFVQQRAAENAEGKNWLIFGNPHFARDFLYQTEWQQFAKDGFLHRYDFAWSRDQEEKIYVQDKIREQAEGLWQWLQEGAHIYVCGDAAKMAKDVEAALLDVIIGAGHLDEEGAEEYLDMLREEKRYQRDVY</sequence>
<name>CYSJ_NEIMB</name>
<dbReference type="EC" id="1.8.1.2" evidence="1"/>
<dbReference type="EMBL" id="AE002098">
    <property type="protein sequence ID" value="AAF41573.1"/>
    <property type="molecule type" value="Genomic_DNA"/>
</dbReference>
<dbReference type="EMBL" id="AE002098">
    <property type="protein sequence ID" value="AAF41538.1"/>
    <property type="molecule type" value="Genomic_DNA"/>
</dbReference>
<dbReference type="PIR" id="H81110">
    <property type="entry name" value="H81110"/>
</dbReference>
<dbReference type="RefSeq" id="NP_274180.1">
    <property type="nucleotide sequence ID" value="NC_003112.2"/>
</dbReference>
<dbReference type="RefSeq" id="NP_274216.1">
    <property type="nucleotide sequence ID" value="NC_003112.2"/>
</dbReference>
<dbReference type="RefSeq" id="WP_010980903.1">
    <property type="nucleotide sequence ID" value="NC_003112.2"/>
</dbReference>
<dbReference type="SMR" id="Q9JS45"/>
<dbReference type="FunCoup" id="Q9JS45">
    <property type="interactions" value="348"/>
</dbReference>
<dbReference type="STRING" id="122586.NMB1152"/>
<dbReference type="PaxDb" id="122586-NMB1152"/>
<dbReference type="KEGG" id="nme:NMB1152"/>
<dbReference type="KEGG" id="nme:NMB1190"/>
<dbReference type="PATRIC" id="fig|122586.8.peg.1457"/>
<dbReference type="HOGENOM" id="CLU_001570_17_7_4"/>
<dbReference type="InParanoid" id="Q9JS45"/>
<dbReference type="OrthoDB" id="9816402at2"/>
<dbReference type="UniPathway" id="UPA00140">
    <property type="reaction ID" value="UER00207"/>
</dbReference>
<dbReference type="Proteomes" id="UP000000425">
    <property type="component" value="Chromosome"/>
</dbReference>
<dbReference type="GO" id="GO:0005829">
    <property type="term" value="C:cytosol"/>
    <property type="evidence" value="ECO:0000318"/>
    <property type="project" value="GO_Central"/>
</dbReference>
<dbReference type="GO" id="GO:0050660">
    <property type="term" value="F:flavin adenine dinucleotide binding"/>
    <property type="evidence" value="ECO:0000318"/>
    <property type="project" value="GO_Central"/>
</dbReference>
<dbReference type="GO" id="GO:0010181">
    <property type="term" value="F:FMN binding"/>
    <property type="evidence" value="ECO:0000318"/>
    <property type="project" value="GO_Central"/>
</dbReference>
<dbReference type="GO" id="GO:0016491">
    <property type="term" value="F:oxidoreductase activity"/>
    <property type="evidence" value="ECO:0000318"/>
    <property type="project" value="GO_Central"/>
</dbReference>
<dbReference type="GO" id="GO:0004783">
    <property type="term" value="F:sulfite reductase (NADPH) activity"/>
    <property type="evidence" value="ECO:0007669"/>
    <property type="project" value="UniProtKB-UniRule"/>
</dbReference>
<dbReference type="GO" id="GO:0019344">
    <property type="term" value="P:cysteine biosynthetic process"/>
    <property type="evidence" value="ECO:0007669"/>
    <property type="project" value="UniProtKB-KW"/>
</dbReference>
<dbReference type="GO" id="GO:0070814">
    <property type="term" value="P:hydrogen sulfide biosynthetic process"/>
    <property type="evidence" value="ECO:0007669"/>
    <property type="project" value="UniProtKB-UniRule"/>
</dbReference>
<dbReference type="GO" id="GO:0000103">
    <property type="term" value="P:sulfate assimilation"/>
    <property type="evidence" value="ECO:0007669"/>
    <property type="project" value="UniProtKB-UniRule"/>
</dbReference>
<dbReference type="CDD" id="cd06199">
    <property type="entry name" value="SiR"/>
    <property type="match status" value="1"/>
</dbReference>
<dbReference type="FunFam" id="3.40.50.80:FF:000001">
    <property type="entry name" value="NADPH--cytochrome P450 reductase 1"/>
    <property type="match status" value="1"/>
</dbReference>
<dbReference type="FunFam" id="1.20.990.10:FF:000004">
    <property type="entry name" value="Sulfite reductase [NADPH] flavoprotein alpha-component"/>
    <property type="match status" value="1"/>
</dbReference>
<dbReference type="FunFam" id="3.40.50.360:FF:000018">
    <property type="entry name" value="Sulfite reductase [NADPH] flavoprotein alpha-component"/>
    <property type="match status" value="1"/>
</dbReference>
<dbReference type="Gene3D" id="3.40.50.360">
    <property type="match status" value="1"/>
</dbReference>
<dbReference type="Gene3D" id="1.20.990.10">
    <property type="entry name" value="NADPH-cytochrome p450 Reductase, Chain A, domain 3"/>
    <property type="match status" value="1"/>
</dbReference>
<dbReference type="Gene3D" id="3.40.50.80">
    <property type="entry name" value="Nucleotide-binding domain of ferredoxin-NADP reductase (FNR) module"/>
    <property type="match status" value="1"/>
</dbReference>
<dbReference type="Gene3D" id="2.40.30.10">
    <property type="entry name" value="Translation factors"/>
    <property type="match status" value="1"/>
</dbReference>
<dbReference type="HAMAP" id="MF_01541">
    <property type="entry name" value="CysJ"/>
    <property type="match status" value="1"/>
</dbReference>
<dbReference type="InterPro" id="IPR010199">
    <property type="entry name" value="CysJ"/>
</dbReference>
<dbReference type="InterPro" id="IPR003097">
    <property type="entry name" value="CysJ-like_FAD-binding"/>
</dbReference>
<dbReference type="InterPro" id="IPR029758">
    <property type="entry name" value="CysJ_Proteobact"/>
</dbReference>
<dbReference type="InterPro" id="IPR017927">
    <property type="entry name" value="FAD-bd_FR_type"/>
</dbReference>
<dbReference type="InterPro" id="IPR001094">
    <property type="entry name" value="Flavdoxin-like"/>
</dbReference>
<dbReference type="InterPro" id="IPR008254">
    <property type="entry name" value="Flavodoxin/NO_synth"/>
</dbReference>
<dbReference type="InterPro" id="IPR001709">
    <property type="entry name" value="Flavoprot_Pyr_Nucl_cyt_Rdtase"/>
</dbReference>
<dbReference type="InterPro" id="IPR029039">
    <property type="entry name" value="Flavoprotein-like_sf"/>
</dbReference>
<dbReference type="InterPro" id="IPR039261">
    <property type="entry name" value="FNR_nucleotide-bd"/>
</dbReference>
<dbReference type="InterPro" id="IPR023173">
    <property type="entry name" value="NADPH_Cyt_P450_Rdtase_alpha"/>
</dbReference>
<dbReference type="InterPro" id="IPR001433">
    <property type="entry name" value="OxRdtase_FAD/NAD-bd"/>
</dbReference>
<dbReference type="InterPro" id="IPR017938">
    <property type="entry name" value="Riboflavin_synthase-like_b-brl"/>
</dbReference>
<dbReference type="NCBIfam" id="TIGR01931">
    <property type="entry name" value="cysJ"/>
    <property type="match status" value="1"/>
</dbReference>
<dbReference type="PANTHER" id="PTHR19384:SF128">
    <property type="entry name" value="NADPH OXIDOREDUCTASE A"/>
    <property type="match status" value="1"/>
</dbReference>
<dbReference type="PANTHER" id="PTHR19384">
    <property type="entry name" value="NITRIC OXIDE SYNTHASE-RELATED"/>
    <property type="match status" value="1"/>
</dbReference>
<dbReference type="Pfam" id="PF00667">
    <property type="entry name" value="FAD_binding_1"/>
    <property type="match status" value="1"/>
</dbReference>
<dbReference type="Pfam" id="PF00258">
    <property type="entry name" value="Flavodoxin_1"/>
    <property type="match status" value="1"/>
</dbReference>
<dbReference type="Pfam" id="PF00175">
    <property type="entry name" value="NAD_binding_1"/>
    <property type="match status" value="1"/>
</dbReference>
<dbReference type="PIRSF" id="PIRSF000207">
    <property type="entry name" value="SiR-FP_CysJ"/>
    <property type="match status" value="1"/>
</dbReference>
<dbReference type="PRINTS" id="PR00369">
    <property type="entry name" value="FLAVODOXIN"/>
</dbReference>
<dbReference type="PRINTS" id="PR00371">
    <property type="entry name" value="FPNCR"/>
</dbReference>
<dbReference type="SUPFAM" id="SSF52343">
    <property type="entry name" value="Ferredoxin reductase-like, C-terminal NADP-linked domain"/>
    <property type="match status" value="1"/>
</dbReference>
<dbReference type="SUPFAM" id="SSF52218">
    <property type="entry name" value="Flavoproteins"/>
    <property type="match status" value="1"/>
</dbReference>
<dbReference type="SUPFAM" id="SSF63380">
    <property type="entry name" value="Riboflavin synthase domain-like"/>
    <property type="match status" value="1"/>
</dbReference>
<dbReference type="PROSITE" id="PS51384">
    <property type="entry name" value="FAD_FR"/>
    <property type="match status" value="1"/>
</dbReference>
<dbReference type="PROSITE" id="PS50902">
    <property type="entry name" value="FLAVODOXIN_LIKE"/>
    <property type="match status" value="1"/>
</dbReference>
<reference key="1">
    <citation type="journal article" date="2000" name="Science">
        <title>Complete genome sequence of Neisseria meningitidis serogroup B strain MC58.</title>
        <authorList>
            <person name="Tettelin H."/>
            <person name="Saunders N.J."/>
            <person name="Heidelberg J.F."/>
            <person name="Jeffries A.C."/>
            <person name="Nelson K.E."/>
            <person name="Eisen J.A."/>
            <person name="Ketchum K.A."/>
            <person name="Hood D.W."/>
            <person name="Peden J.F."/>
            <person name="Dodson R.J."/>
            <person name="Nelson W.C."/>
            <person name="Gwinn M.L."/>
            <person name="DeBoy R.T."/>
            <person name="Peterson J.D."/>
            <person name="Hickey E.K."/>
            <person name="Haft D.H."/>
            <person name="Salzberg S.L."/>
            <person name="White O."/>
            <person name="Fleischmann R.D."/>
            <person name="Dougherty B.A."/>
            <person name="Mason T.M."/>
            <person name="Ciecko A."/>
            <person name="Parksey D.S."/>
            <person name="Blair E."/>
            <person name="Cittone H."/>
            <person name="Clark E.B."/>
            <person name="Cotton M.D."/>
            <person name="Utterback T.R."/>
            <person name="Khouri H.M."/>
            <person name="Qin H."/>
            <person name="Vamathevan J.J."/>
            <person name="Gill J."/>
            <person name="Scarlato V."/>
            <person name="Masignani V."/>
            <person name="Pizza M."/>
            <person name="Grandi G."/>
            <person name="Sun L."/>
            <person name="Smith H.O."/>
            <person name="Fraser C.M."/>
            <person name="Moxon E.R."/>
            <person name="Rappuoli R."/>
            <person name="Venter J.C."/>
        </authorList>
    </citation>
    <scope>NUCLEOTIDE SEQUENCE [LARGE SCALE GENOMIC DNA]</scope>
    <source>
        <strain>ATCC BAA-335 / MC58</strain>
    </source>
</reference>
<proteinExistence type="inferred from homology"/>
<evidence type="ECO:0000255" key="1">
    <source>
        <dbReference type="HAMAP-Rule" id="MF_01541"/>
    </source>
</evidence>
<protein>
    <recommendedName>
        <fullName evidence="1">Sulfite reductase [NADPH] flavoprotein alpha-component</fullName>
        <shortName evidence="1">SiR-FP</shortName>
        <ecNumber evidence="1">1.8.1.2</ecNumber>
    </recommendedName>
</protein>
<keyword id="KW-0028">Amino-acid biosynthesis</keyword>
<keyword id="KW-0198">Cysteine biosynthesis</keyword>
<keyword id="KW-0249">Electron transport</keyword>
<keyword id="KW-0274">FAD</keyword>
<keyword id="KW-0285">Flavoprotein</keyword>
<keyword id="KW-0288">FMN</keyword>
<keyword id="KW-0521">NADP</keyword>
<keyword id="KW-0560">Oxidoreductase</keyword>
<keyword id="KW-1185">Reference proteome</keyword>
<keyword id="KW-0813">Transport</keyword>
<feature type="chain" id="PRO_0000199929" description="Sulfite reductase [NADPH] flavoprotein alpha-component">
    <location>
        <begin position="1"/>
        <end position="604"/>
    </location>
</feature>
<feature type="domain" description="Flavodoxin-like" evidence="1">
    <location>
        <begin position="66"/>
        <end position="204"/>
    </location>
</feature>
<feature type="domain" description="FAD-binding FR-type" evidence="1">
    <location>
        <begin position="239"/>
        <end position="453"/>
    </location>
</feature>
<feature type="binding site" evidence="1">
    <location>
        <begin position="72"/>
        <end position="77"/>
    </location>
    <ligand>
        <name>FMN</name>
        <dbReference type="ChEBI" id="CHEBI:58210"/>
    </ligand>
</feature>
<feature type="binding site" evidence="1">
    <location>
        <begin position="119"/>
        <end position="122"/>
    </location>
    <ligand>
        <name>FMN</name>
        <dbReference type="ChEBI" id="CHEBI:58210"/>
    </ligand>
</feature>
<feature type="binding site" evidence="1">
    <location>
        <begin position="155"/>
        <end position="164"/>
    </location>
    <ligand>
        <name>FMN</name>
        <dbReference type="ChEBI" id="CHEBI:58210"/>
    </ligand>
</feature>
<feature type="binding site" evidence="1">
    <location>
        <position position="327"/>
    </location>
    <ligand>
        <name>FAD</name>
        <dbReference type="ChEBI" id="CHEBI:57692"/>
    </ligand>
</feature>
<feature type="binding site" evidence="1">
    <location>
        <position position="361"/>
    </location>
    <ligand>
        <name>FAD</name>
        <dbReference type="ChEBI" id="CHEBI:57692"/>
    </ligand>
</feature>
<feature type="binding site" evidence="1">
    <location>
        <begin position="391"/>
        <end position="394"/>
    </location>
    <ligand>
        <name>FAD</name>
        <dbReference type="ChEBI" id="CHEBI:57692"/>
    </ligand>
</feature>
<feature type="binding site" evidence="1">
    <location>
        <begin position="409"/>
        <end position="411"/>
    </location>
    <ligand>
        <name>FAD</name>
        <dbReference type="ChEBI" id="CHEBI:57692"/>
    </ligand>
</feature>
<feature type="binding site" evidence="1">
    <location>
        <begin position="424"/>
        <end position="427"/>
    </location>
    <ligand>
        <name>FAD</name>
        <dbReference type="ChEBI" id="CHEBI:57692"/>
    </ligand>
</feature>
<feature type="binding site" evidence="1">
    <location>
        <begin position="524"/>
        <end position="525"/>
    </location>
    <ligand>
        <name>NADP(+)</name>
        <dbReference type="ChEBI" id="CHEBI:58349"/>
    </ligand>
</feature>
<feature type="binding site" evidence="1">
    <location>
        <begin position="530"/>
        <end position="534"/>
    </location>
    <ligand>
        <name>NADP(+)</name>
        <dbReference type="ChEBI" id="CHEBI:58349"/>
    </ligand>
</feature>
<feature type="binding site" evidence="1">
    <location>
        <position position="566"/>
    </location>
    <ligand>
        <name>NADP(+)</name>
        <dbReference type="ChEBI" id="CHEBI:58349"/>
    </ligand>
</feature>
<feature type="binding site" evidence="1">
    <location>
        <position position="604"/>
    </location>
    <ligand>
        <name>FAD</name>
        <dbReference type="ChEBI" id="CHEBI:57692"/>
    </ligand>
</feature>
<organism>
    <name type="scientific">Neisseria meningitidis serogroup B (strain ATCC BAA-335 / MC58)</name>
    <dbReference type="NCBI Taxonomy" id="122586"/>
    <lineage>
        <taxon>Bacteria</taxon>
        <taxon>Pseudomonadati</taxon>
        <taxon>Pseudomonadota</taxon>
        <taxon>Betaproteobacteria</taxon>
        <taxon>Neisseriales</taxon>
        <taxon>Neisseriaceae</taxon>
        <taxon>Neisseria</taxon>
    </lineage>
</organism>
<accession>Q9JS45</accession>
<gene>
    <name evidence="1" type="primary">cysJ1</name>
    <name type="synonym">cysJ-1</name>
    <name type="ordered locus">NMB1152</name>
</gene>
<gene>
    <name evidence="1" type="primary">cysJ2</name>
    <name type="synonym">cysJ-2</name>
    <name type="ordered locus">NMB1190</name>
</gene>